<accession>O84348</accession>
<comment type="function">
    <text evidence="1">ATP-dependent serine protease that mediates the selective degradation of mutant and abnormal proteins as well as certain short-lived regulatory proteins. Required for cellular homeostasis and for survival from DNA damage and developmental changes induced by stress. Degrades polypeptides processively to yield small peptide fragments that are 5 to 10 amino acids long. Binds to DNA in a double-stranded, site-specific manner.</text>
</comment>
<comment type="catalytic activity">
    <reaction evidence="1">
        <text>Hydrolysis of proteins in presence of ATP.</text>
        <dbReference type="EC" id="3.4.21.53"/>
    </reaction>
</comment>
<comment type="subunit">
    <text evidence="1">Homohexamer. Organized in a ring with a central cavity.</text>
</comment>
<comment type="subcellular location">
    <subcellularLocation>
        <location evidence="1">Cytoplasm</location>
    </subcellularLocation>
</comment>
<comment type="induction">
    <text evidence="1">By heat shock.</text>
</comment>
<comment type="similarity">
    <text evidence="1">Belongs to the peptidase S16 family.</text>
</comment>
<feature type="chain" id="PRO_0000076132" description="Lon protease">
    <location>
        <begin position="1"/>
        <end position="819"/>
    </location>
</feature>
<feature type="domain" description="Lon N-terminal" evidence="3">
    <location>
        <begin position="42"/>
        <end position="239"/>
    </location>
</feature>
<feature type="domain" description="Lon proteolytic" evidence="2">
    <location>
        <begin position="634"/>
        <end position="818"/>
    </location>
</feature>
<feature type="region of interest" description="Disordered" evidence="4">
    <location>
        <begin position="1"/>
        <end position="40"/>
    </location>
</feature>
<feature type="compositionally biased region" description="Polar residues" evidence="4">
    <location>
        <begin position="1"/>
        <end position="14"/>
    </location>
</feature>
<feature type="compositionally biased region" description="Basic and acidic residues" evidence="4">
    <location>
        <begin position="18"/>
        <end position="38"/>
    </location>
</feature>
<feature type="active site" evidence="1">
    <location>
        <position position="724"/>
    </location>
</feature>
<feature type="active site" evidence="1">
    <location>
        <position position="767"/>
    </location>
</feature>
<feature type="binding site" evidence="1">
    <location>
        <begin position="392"/>
        <end position="399"/>
    </location>
    <ligand>
        <name>ATP</name>
        <dbReference type="ChEBI" id="CHEBI:30616"/>
    </ligand>
</feature>
<dbReference type="EC" id="3.4.21.53" evidence="1"/>
<dbReference type="EMBL" id="AE001273">
    <property type="protein sequence ID" value="AAC67939.1"/>
    <property type="molecule type" value="Genomic_DNA"/>
</dbReference>
<dbReference type="PIR" id="C71527">
    <property type="entry name" value="C71527"/>
</dbReference>
<dbReference type="RefSeq" id="NP_219851.1">
    <property type="nucleotide sequence ID" value="NC_000117.1"/>
</dbReference>
<dbReference type="RefSeq" id="WP_009871695.1">
    <property type="nucleotide sequence ID" value="NC_000117.1"/>
</dbReference>
<dbReference type="SMR" id="O84348"/>
<dbReference type="FunCoup" id="O84348">
    <property type="interactions" value="246"/>
</dbReference>
<dbReference type="STRING" id="272561.CT_344"/>
<dbReference type="EnsemblBacteria" id="AAC67939">
    <property type="protein sequence ID" value="AAC67939"/>
    <property type="gene ID" value="CT_344"/>
</dbReference>
<dbReference type="GeneID" id="884768"/>
<dbReference type="KEGG" id="ctr:CT_344"/>
<dbReference type="PATRIC" id="fig|272561.5.peg.372"/>
<dbReference type="HOGENOM" id="CLU_004109_1_0_0"/>
<dbReference type="InParanoid" id="O84348"/>
<dbReference type="OrthoDB" id="9803599at2"/>
<dbReference type="Proteomes" id="UP000000431">
    <property type="component" value="Chromosome"/>
</dbReference>
<dbReference type="GO" id="GO:0005737">
    <property type="term" value="C:cytoplasm"/>
    <property type="evidence" value="ECO:0007669"/>
    <property type="project" value="UniProtKB-SubCell"/>
</dbReference>
<dbReference type="GO" id="GO:0005524">
    <property type="term" value="F:ATP binding"/>
    <property type="evidence" value="ECO:0007669"/>
    <property type="project" value="UniProtKB-UniRule"/>
</dbReference>
<dbReference type="GO" id="GO:0016887">
    <property type="term" value="F:ATP hydrolysis activity"/>
    <property type="evidence" value="ECO:0007669"/>
    <property type="project" value="UniProtKB-UniRule"/>
</dbReference>
<dbReference type="GO" id="GO:0004176">
    <property type="term" value="F:ATP-dependent peptidase activity"/>
    <property type="evidence" value="ECO:0000318"/>
    <property type="project" value="GO_Central"/>
</dbReference>
<dbReference type="GO" id="GO:0043565">
    <property type="term" value="F:sequence-specific DNA binding"/>
    <property type="evidence" value="ECO:0007669"/>
    <property type="project" value="UniProtKB-UniRule"/>
</dbReference>
<dbReference type="GO" id="GO:0004252">
    <property type="term" value="F:serine-type endopeptidase activity"/>
    <property type="evidence" value="ECO:0007669"/>
    <property type="project" value="UniProtKB-UniRule"/>
</dbReference>
<dbReference type="GO" id="GO:0034605">
    <property type="term" value="P:cellular response to heat"/>
    <property type="evidence" value="ECO:0007669"/>
    <property type="project" value="UniProtKB-UniRule"/>
</dbReference>
<dbReference type="GO" id="GO:0006515">
    <property type="term" value="P:protein quality control for misfolded or incompletely synthesized proteins"/>
    <property type="evidence" value="ECO:0000318"/>
    <property type="project" value="GO_Central"/>
</dbReference>
<dbReference type="CDD" id="cd19500">
    <property type="entry name" value="RecA-like_Lon"/>
    <property type="match status" value="1"/>
</dbReference>
<dbReference type="FunFam" id="1.10.8.60:FF:000171">
    <property type="entry name" value="Lon protease"/>
    <property type="match status" value="1"/>
</dbReference>
<dbReference type="FunFam" id="3.40.50.300:FF:000021">
    <property type="entry name" value="Lon protease homolog"/>
    <property type="match status" value="1"/>
</dbReference>
<dbReference type="FunFam" id="1.20.5.5270:FF:000001">
    <property type="entry name" value="Lon protease homolog, mitochondrial"/>
    <property type="match status" value="1"/>
</dbReference>
<dbReference type="FunFam" id="1.20.58.1480:FF:000002">
    <property type="entry name" value="Lon protease homolog, mitochondrial"/>
    <property type="match status" value="1"/>
</dbReference>
<dbReference type="FunFam" id="3.30.230.10:FF:000015">
    <property type="entry name" value="Lon protease homolog, mitochondrial"/>
    <property type="match status" value="1"/>
</dbReference>
<dbReference type="Gene3D" id="1.10.8.60">
    <property type="match status" value="1"/>
</dbReference>
<dbReference type="Gene3D" id="1.20.5.5270">
    <property type="match status" value="1"/>
</dbReference>
<dbReference type="Gene3D" id="1.20.58.1480">
    <property type="match status" value="1"/>
</dbReference>
<dbReference type="Gene3D" id="3.30.230.10">
    <property type="match status" value="1"/>
</dbReference>
<dbReference type="Gene3D" id="2.30.130.40">
    <property type="entry name" value="LON domain-like"/>
    <property type="match status" value="1"/>
</dbReference>
<dbReference type="Gene3D" id="3.40.50.300">
    <property type="entry name" value="P-loop containing nucleotide triphosphate hydrolases"/>
    <property type="match status" value="1"/>
</dbReference>
<dbReference type="HAMAP" id="MF_01973">
    <property type="entry name" value="lon_bact"/>
    <property type="match status" value="1"/>
</dbReference>
<dbReference type="InterPro" id="IPR003593">
    <property type="entry name" value="AAA+_ATPase"/>
</dbReference>
<dbReference type="InterPro" id="IPR003959">
    <property type="entry name" value="ATPase_AAA_core"/>
</dbReference>
<dbReference type="InterPro" id="IPR027543">
    <property type="entry name" value="Lon_bac"/>
</dbReference>
<dbReference type="InterPro" id="IPR004815">
    <property type="entry name" value="Lon_bac/euk-typ"/>
</dbReference>
<dbReference type="InterPro" id="IPR054594">
    <property type="entry name" value="Lon_lid"/>
</dbReference>
<dbReference type="InterPro" id="IPR008269">
    <property type="entry name" value="Lon_proteolytic"/>
</dbReference>
<dbReference type="InterPro" id="IPR027065">
    <property type="entry name" value="Lon_Prtase"/>
</dbReference>
<dbReference type="InterPro" id="IPR003111">
    <property type="entry name" value="Lon_prtase_N"/>
</dbReference>
<dbReference type="InterPro" id="IPR046336">
    <property type="entry name" value="Lon_prtase_N_sf"/>
</dbReference>
<dbReference type="InterPro" id="IPR027417">
    <property type="entry name" value="P-loop_NTPase"/>
</dbReference>
<dbReference type="InterPro" id="IPR008268">
    <property type="entry name" value="Peptidase_S16_AS"/>
</dbReference>
<dbReference type="InterPro" id="IPR015947">
    <property type="entry name" value="PUA-like_sf"/>
</dbReference>
<dbReference type="InterPro" id="IPR020568">
    <property type="entry name" value="Ribosomal_Su5_D2-typ_SF"/>
</dbReference>
<dbReference type="InterPro" id="IPR014721">
    <property type="entry name" value="Ribsml_uS5_D2-typ_fold_subgr"/>
</dbReference>
<dbReference type="NCBIfam" id="TIGR00763">
    <property type="entry name" value="lon"/>
    <property type="match status" value="1"/>
</dbReference>
<dbReference type="PANTHER" id="PTHR43718">
    <property type="entry name" value="LON PROTEASE"/>
    <property type="match status" value="1"/>
</dbReference>
<dbReference type="PANTHER" id="PTHR43718:SF2">
    <property type="entry name" value="LON PROTEASE HOMOLOG, MITOCHONDRIAL"/>
    <property type="match status" value="1"/>
</dbReference>
<dbReference type="Pfam" id="PF00004">
    <property type="entry name" value="AAA"/>
    <property type="match status" value="1"/>
</dbReference>
<dbReference type="Pfam" id="PF05362">
    <property type="entry name" value="Lon_C"/>
    <property type="match status" value="1"/>
</dbReference>
<dbReference type="Pfam" id="PF22667">
    <property type="entry name" value="Lon_lid"/>
    <property type="match status" value="1"/>
</dbReference>
<dbReference type="Pfam" id="PF02190">
    <property type="entry name" value="LON_substr_bdg"/>
    <property type="match status" value="1"/>
</dbReference>
<dbReference type="PIRSF" id="PIRSF001174">
    <property type="entry name" value="Lon_proteas"/>
    <property type="match status" value="1"/>
</dbReference>
<dbReference type="PRINTS" id="PR00830">
    <property type="entry name" value="ENDOLAPTASE"/>
</dbReference>
<dbReference type="SMART" id="SM00382">
    <property type="entry name" value="AAA"/>
    <property type="match status" value="1"/>
</dbReference>
<dbReference type="SMART" id="SM00464">
    <property type="entry name" value="LON"/>
    <property type="match status" value="1"/>
</dbReference>
<dbReference type="SUPFAM" id="SSF52540">
    <property type="entry name" value="P-loop containing nucleoside triphosphate hydrolases"/>
    <property type="match status" value="1"/>
</dbReference>
<dbReference type="SUPFAM" id="SSF88697">
    <property type="entry name" value="PUA domain-like"/>
    <property type="match status" value="1"/>
</dbReference>
<dbReference type="SUPFAM" id="SSF54211">
    <property type="entry name" value="Ribosomal protein S5 domain 2-like"/>
    <property type="match status" value="1"/>
</dbReference>
<dbReference type="PROSITE" id="PS51787">
    <property type="entry name" value="LON_N"/>
    <property type="match status" value="1"/>
</dbReference>
<dbReference type="PROSITE" id="PS51786">
    <property type="entry name" value="LON_PROTEOLYTIC"/>
    <property type="match status" value="1"/>
</dbReference>
<dbReference type="PROSITE" id="PS01046">
    <property type="entry name" value="LON_SER"/>
    <property type="match status" value="1"/>
</dbReference>
<reference key="1">
    <citation type="journal article" date="1998" name="Science">
        <title>Genome sequence of an obligate intracellular pathogen of humans: Chlamydia trachomatis.</title>
        <authorList>
            <person name="Stephens R.S."/>
            <person name="Kalman S."/>
            <person name="Lammel C.J."/>
            <person name="Fan J."/>
            <person name="Marathe R."/>
            <person name="Aravind L."/>
            <person name="Mitchell W.P."/>
            <person name="Olinger L."/>
            <person name="Tatusov R.L."/>
            <person name="Zhao Q."/>
            <person name="Koonin E.V."/>
            <person name="Davis R.W."/>
        </authorList>
    </citation>
    <scope>NUCLEOTIDE SEQUENCE [LARGE SCALE GENOMIC DNA]</scope>
    <source>
        <strain>ATCC VR-885 / DSM 19411 / UW-3/Cx</strain>
    </source>
</reference>
<sequence length="819" mass="91965">MNSTNNTDSQNLDPNASEVEKLLDESAEAEEKVDDHTPPSELFILPLNKRPFFPGMAAPLLIEAGPHYEVLTLLAKSSQKHIGLVLTKKEDANTLKVGFNQLHRVGVSARILRIMPIEGGSAQVLLSIEDRIRIVKPIQDKYLKAKVSYHKENKELTEELKAYSISIVSIIKDLLKLNPLFKEELQIFLGHSDFTEPGKLADFSVALTTATREELQEILETTDMHDRIDKALVLLKKELDLSRLQSSINQKIEATITKSQKEFFLKEQLKTIKKELGLEKDDHAVDLEKFMERFNKRDVPQYAMDVIQDEMDKLQTLETSSAEYAVCRNYLDWLTIVPWGIQTKEYHDLKKAESILNKDHYGLEDIKQRILELISVGKLANGMKGSIICLVGPPGVGKTSIGRSIAKVLHRKFFRFSVGGMRDEAEIKGHRRTYIGAMPGKLVQALKQSQIMNPVIMIDEVDKIGSSYHGDPASALLEVLDPEQNKDFLDHYLDVRVDLSNVLFILTANVLDSIPDPLLDRMEVLRLSGYILEEKLQIATKYLVPRARKEMGLSAQNVTFQPEALKHMINNYAREAGVRTLNENIKKVLRKVALKIVQNQEKNLSKKSRFTITPKNLQDYLGKPVFSSDRFYEKTPVGVATGLAWTSLGGATLYIESVQVPSSSGKADMHLTGQAGDVMKESSQIAWTYLHSALERYAPGQPFFEKSQVHIHIPEGATPKDGPSAGITMVTSLLSLLLDVPVLNNLGMTGELTLTGRVLGIGGIREKLIAARRSKLNILIFPEDNRRDYDELPAYLKKGLKVHFVTHYDDVFKIAFPGV</sequence>
<name>LON_CHLTR</name>
<proteinExistence type="inferred from homology"/>
<gene>
    <name evidence="1" type="primary">lon</name>
    <name type="ordered locus">CT_344</name>
</gene>
<evidence type="ECO:0000255" key="1">
    <source>
        <dbReference type="HAMAP-Rule" id="MF_01973"/>
    </source>
</evidence>
<evidence type="ECO:0000255" key="2">
    <source>
        <dbReference type="PROSITE-ProRule" id="PRU01122"/>
    </source>
</evidence>
<evidence type="ECO:0000255" key="3">
    <source>
        <dbReference type="PROSITE-ProRule" id="PRU01123"/>
    </source>
</evidence>
<evidence type="ECO:0000256" key="4">
    <source>
        <dbReference type="SAM" id="MobiDB-lite"/>
    </source>
</evidence>
<organism>
    <name type="scientific">Chlamydia trachomatis serovar D (strain ATCC VR-885 / DSM 19411 / UW-3/Cx)</name>
    <dbReference type="NCBI Taxonomy" id="272561"/>
    <lineage>
        <taxon>Bacteria</taxon>
        <taxon>Pseudomonadati</taxon>
        <taxon>Chlamydiota</taxon>
        <taxon>Chlamydiia</taxon>
        <taxon>Chlamydiales</taxon>
        <taxon>Chlamydiaceae</taxon>
        <taxon>Chlamydia/Chlamydophila group</taxon>
        <taxon>Chlamydia</taxon>
    </lineage>
</organism>
<keyword id="KW-0067">ATP-binding</keyword>
<keyword id="KW-0963">Cytoplasm</keyword>
<keyword id="KW-0378">Hydrolase</keyword>
<keyword id="KW-0547">Nucleotide-binding</keyword>
<keyword id="KW-0645">Protease</keyword>
<keyword id="KW-1185">Reference proteome</keyword>
<keyword id="KW-0720">Serine protease</keyword>
<keyword id="KW-0346">Stress response</keyword>
<protein>
    <recommendedName>
        <fullName evidence="1">Lon protease</fullName>
        <ecNumber evidence="1">3.4.21.53</ecNumber>
    </recommendedName>
    <alternativeName>
        <fullName evidence="1">ATP-dependent protease La</fullName>
    </alternativeName>
</protein>